<name>Y1021_SYNY3</name>
<reference key="1">
    <citation type="journal article" date="1996" name="DNA Res.">
        <title>Sequence analysis of the genome of the unicellular cyanobacterium Synechocystis sp. strain PCC6803. II. Sequence determination of the entire genome and assignment of potential protein-coding regions.</title>
        <authorList>
            <person name="Kaneko T."/>
            <person name="Sato S."/>
            <person name="Kotani H."/>
            <person name="Tanaka A."/>
            <person name="Asamizu E."/>
            <person name="Nakamura Y."/>
            <person name="Miyajima N."/>
            <person name="Hirosawa M."/>
            <person name="Sugiura M."/>
            <person name="Sasamoto S."/>
            <person name="Kimura T."/>
            <person name="Hosouchi T."/>
            <person name="Matsuno A."/>
            <person name="Muraki A."/>
            <person name="Nakazaki N."/>
            <person name="Naruo K."/>
            <person name="Okumura S."/>
            <person name="Shimpo S."/>
            <person name="Takeuchi C."/>
            <person name="Wada T."/>
            <person name="Watanabe A."/>
            <person name="Yamada M."/>
            <person name="Yasuda M."/>
            <person name="Tabata S."/>
        </authorList>
    </citation>
    <scope>NUCLEOTIDE SEQUENCE [LARGE SCALE GENOMIC DNA]</scope>
    <source>
        <strain>ATCC 27184 / PCC 6803 / Kazusa</strain>
    </source>
</reference>
<dbReference type="EMBL" id="BA000022">
    <property type="protein sequence ID" value="BAA16946.1"/>
    <property type="molecule type" value="Genomic_DNA"/>
</dbReference>
<dbReference type="PIR" id="S74795">
    <property type="entry name" value="S74795"/>
</dbReference>
<dbReference type="SMR" id="P72929"/>
<dbReference type="IntAct" id="P72929">
    <property type="interactions" value="1"/>
</dbReference>
<dbReference type="STRING" id="1148.gene:10497806"/>
<dbReference type="PaxDb" id="1148-1652020"/>
<dbReference type="EnsemblBacteria" id="BAA16946">
    <property type="protein sequence ID" value="BAA16946"/>
    <property type="gene ID" value="BAA16946"/>
</dbReference>
<dbReference type="KEGG" id="syn:sll1021"/>
<dbReference type="eggNOG" id="COG2268">
    <property type="taxonomic scope" value="Bacteria"/>
</dbReference>
<dbReference type="InParanoid" id="P72929"/>
<dbReference type="PhylomeDB" id="P72929"/>
<dbReference type="Proteomes" id="UP000001425">
    <property type="component" value="Chromosome"/>
</dbReference>
<dbReference type="GO" id="GO:0045121">
    <property type="term" value="C:membrane raft"/>
    <property type="evidence" value="ECO:0007669"/>
    <property type="project" value="UniProtKB-SubCell"/>
</dbReference>
<dbReference type="GO" id="GO:0005886">
    <property type="term" value="C:plasma membrane"/>
    <property type="evidence" value="ECO:0000318"/>
    <property type="project" value="GO_Central"/>
</dbReference>
<dbReference type="CDD" id="cd03399">
    <property type="entry name" value="SPFH_flotillin"/>
    <property type="match status" value="1"/>
</dbReference>
<dbReference type="Gene3D" id="3.30.479.30">
    <property type="entry name" value="Band 7 domain"/>
    <property type="match status" value="1"/>
</dbReference>
<dbReference type="InterPro" id="IPR001107">
    <property type="entry name" value="Band_7"/>
</dbReference>
<dbReference type="InterPro" id="IPR036013">
    <property type="entry name" value="Band_7/SPFH_dom_sf"/>
</dbReference>
<dbReference type="InterPro" id="IPR031905">
    <property type="entry name" value="Flotillin_C"/>
</dbReference>
<dbReference type="InterPro" id="IPR027705">
    <property type="entry name" value="Flotillin_fam"/>
</dbReference>
<dbReference type="PANTHER" id="PTHR13806:SF31">
    <property type="entry name" value="FLOTILLIN-LIKE PROTEIN 1-RELATED"/>
    <property type="match status" value="1"/>
</dbReference>
<dbReference type="PANTHER" id="PTHR13806">
    <property type="entry name" value="FLOTILLIN-RELATED"/>
    <property type="match status" value="1"/>
</dbReference>
<dbReference type="Pfam" id="PF01145">
    <property type="entry name" value="Band_7"/>
    <property type="match status" value="1"/>
</dbReference>
<dbReference type="Pfam" id="PF15975">
    <property type="entry name" value="Flot"/>
    <property type="match status" value="1"/>
</dbReference>
<dbReference type="SUPFAM" id="SSF117892">
    <property type="entry name" value="Band 7/SPFH domain"/>
    <property type="match status" value="1"/>
</dbReference>
<evidence type="ECO:0000250" key="1">
    <source>
        <dbReference type="UniProtKB" id="O32076"/>
    </source>
</evidence>
<evidence type="ECO:0000255" key="2"/>
<evidence type="ECO:0000256" key="3">
    <source>
        <dbReference type="SAM" id="MobiDB-lite"/>
    </source>
</evidence>
<evidence type="ECO:0000305" key="4"/>
<organism>
    <name type="scientific">Synechocystis sp. (strain ATCC 27184 / PCC 6803 / Kazusa)</name>
    <dbReference type="NCBI Taxonomy" id="1111708"/>
    <lineage>
        <taxon>Bacteria</taxon>
        <taxon>Bacillati</taxon>
        <taxon>Cyanobacteriota</taxon>
        <taxon>Cyanophyceae</taxon>
        <taxon>Synechococcales</taxon>
        <taxon>Merismopediaceae</taxon>
        <taxon>Synechocystis</taxon>
    </lineage>
</organism>
<gene>
    <name type="ordered locus">sll1021</name>
</gene>
<proteinExistence type="inferred from homology"/>
<comment type="function">
    <text evidence="1">Found in functional membrane microdomains (FMM) that may be equivalent to eukaryotic membrane rafts. FMMs are highly dynamic and increase in number as cells age. Flotillins are thought to be important factors in membrane fluidity.</text>
</comment>
<comment type="subunit">
    <text evidence="1">Homooligomerizes.</text>
</comment>
<comment type="subcellular location">
    <subcellularLocation>
        <location evidence="4">Cell inner membrane</location>
        <topology evidence="2">Single-pass membrane protein</topology>
    </subcellularLocation>
    <subcellularLocation>
        <location evidence="1">Membrane raft</location>
        <topology evidence="2">Single-pass membrane protein</topology>
    </subcellularLocation>
</comment>
<comment type="similarity">
    <text evidence="4">Belongs to the band 7/mec-2 family. Flotillin subfamily.</text>
</comment>
<feature type="chain" id="PRO_0000157882" description="Flotillin family inner membrane protein sll1021">
    <location>
        <begin position="1"/>
        <end position="673"/>
    </location>
</feature>
<feature type="transmembrane region" description="Helical" evidence="2">
    <location>
        <begin position="60"/>
        <end position="80"/>
    </location>
</feature>
<feature type="region of interest" description="Disordered" evidence="3">
    <location>
        <begin position="639"/>
        <end position="673"/>
    </location>
</feature>
<feature type="compositionally biased region" description="Polar residues" evidence="3">
    <location>
        <begin position="664"/>
        <end position="673"/>
    </location>
</feature>
<sequence>MQSKFWFEFLQTLPTLPGDTVPVMAIQASPGETSGELIIAQAPNQTLDNNNSALGGLSPLLFFPVVIIAVIFLILVTIFLYTRFYVIAPNNEALVRTGGVFKKEQMVILHGGCIVIPGFHEITRVSLREISIDVVRAGNLAVRTQDYMRANMRVTFYVCITPNRNEILTAAARLSKKGQISEADIKDALEKRADDAIRAAAKKKKLAELDSDKLGFADEVLNLIQGDLRKVGLTLNNIAISEIEESDTYDENNFFDAQGVRLRTETIQRSIQQKREVELTTRVAIEQGELEAEKKSLAIKREQEDANITQQKEIELLKLAQRKELESQEAQQQREIQEAKDKEEAKKERNKILQEQAVEEERIQKELAIQNSQIASAIALEERNKELKVAQALQKQEAEVAEIQRKKTIEASQLQAKAEIALAEQKTQITEQTAAIAIANKQKERLEAEALRAEAESGVITAQEVEAAERAQKLAVIVAQQDAQQHRIAEQNVVEIDVFRRRRQAESARQAAELEAESIRTLADANRHKAMAEAEGQKAIIEAHNSLSNANRTAELLKTIWPELVTQLPDLIKALAPQPGVLGESRIYSFPGLSGSNGNGSNSGDINKLLLSTSGLTLLNGLLNEGKLSTVVDQVKSLLQDPPSVSPPSAAVSEDDWPDLAPPTETNFSPEEI</sequence>
<protein>
    <recommendedName>
        <fullName>Flotillin family inner membrane protein sll1021</fullName>
    </recommendedName>
</protein>
<keyword id="KW-0997">Cell inner membrane</keyword>
<keyword id="KW-1003">Cell membrane</keyword>
<keyword id="KW-0472">Membrane</keyword>
<keyword id="KW-1185">Reference proteome</keyword>
<keyword id="KW-0812">Transmembrane</keyword>
<keyword id="KW-1133">Transmembrane helix</keyword>
<accession>P72929</accession>